<accession>A8GYE1</accession>
<dbReference type="EC" id="3.4.21.89"/>
<dbReference type="EMBL" id="CP000849">
    <property type="protein sequence ID" value="ABV78666.1"/>
    <property type="molecule type" value="Genomic_DNA"/>
</dbReference>
<dbReference type="SMR" id="A8GYE1"/>
<dbReference type="MEROPS" id="S26.001"/>
<dbReference type="KEGG" id="rbo:A1I_01370"/>
<dbReference type="HOGENOM" id="CLU_028723_1_2_5"/>
<dbReference type="GO" id="GO:0005886">
    <property type="term" value="C:plasma membrane"/>
    <property type="evidence" value="ECO:0007669"/>
    <property type="project" value="UniProtKB-SubCell"/>
</dbReference>
<dbReference type="GO" id="GO:0004252">
    <property type="term" value="F:serine-type endopeptidase activity"/>
    <property type="evidence" value="ECO:0007669"/>
    <property type="project" value="UniProtKB-EC"/>
</dbReference>
<dbReference type="GO" id="GO:0006465">
    <property type="term" value="P:signal peptide processing"/>
    <property type="evidence" value="ECO:0007669"/>
    <property type="project" value="InterPro"/>
</dbReference>
<dbReference type="CDD" id="cd06530">
    <property type="entry name" value="S26_SPase_I"/>
    <property type="match status" value="1"/>
</dbReference>
<dbReference type="Gene3D" id="2.10.109.10">
    <property type="entry name" value="Umud Fragment, subunit A"/>
    <property type="match status" value="1"/>
</dbReference>
<dbReference type="InterPro" id="IPR036286">
    <property type="entry name" value="LexA/Signal_pep-like_sf"/>
</dbReference>
<dbReference type="InterPro" id="IPR000223">
    <property type="entry name" value="Pept_S26A_signal_pept_1"/>
</dbReference>
<dbReference type="InterPro" id="IPR019758">
    <property type="entry name" value="Pept_S26A_signal_pept_1_CS"/>
</dbReference>
<dbReference type="InterPro" id="IPR019757">
    <property type="entry name" value="Pept_S26A_signal_pept_1_Lys-AS"/>
</dbReference>
<dbReference type="InterPro" id="IPR019533">
    <property type="entry name" value="Peptidase_S26"/>
</dbReference>
<dbReference type="NCBIfam" id="TIGR02227">
    <property type="entry name" value="sigpep_I_bact"/>
    <property type="match status" value="1"/>
</dbReference>
<dbReference type="PANTHER" id="PTHR43390:SF1">
    <property type="entry name" value="CHLOROPLAST PROCESSING PEPTIDASE"/>
    <property type="match status" value="1"/>
</dbReference>
<dbReference type="PANTHER" id="PTHR43390">
    <property type="entry name" value="SIGNAL PEPTIDASE I"/>
    <property type="match status" value="1"/>
</dbReference>
<dbReference type="Pfam" id="PF10502">
    <property type="entry name" value="Peptidase_S26"/>
    <property type="match status" value="1"/>
</dbReference>
<dbReference type="PRINTS" id="PR00727">
    <property type="entry name" value="LEADERPTASE"/>
</dbReference>
<dbReference type="SUPFAM" id="SSF51306">
    <property type="entry name" value="LexA/Signal peptidase"/>
    <property type="match status" value="1"/>
</dbReference>
<dbReference type="PROSITE" id="PS00760">
    <property type="entry name" value="SPASE_I_2"/>
    <property type="match status" value="1"/>
</dbReference>
<dbReference type="PROSITE" id="PS00761">
    <property type="entry name" value="SPASE_I_3"/>
    <property type="match status" value="1"/>
</dbReference>
<organism>
    <name type="scientific">Rickettsia bellii (strain OSU 85-389)</name>
    <dbReference type="NCBI Taxonomy" id="391896"/>
    <lineage>
        <taxon>Bacteria</taxon>
        <taxon>Pseudomonadati</taxon>
        <taxon>Pseudomonadota</taxon>
        <taxon>Alphaproteobacteria</taxon>
        <taxon>Rickettsiales</taxon>
        <taxon>Rickettsiaceae</taxon>
        <taxon>Rickettsieae</taxon>
        <taxon>Rickettsia</taxon>
        <taxon>belli group</taxon>
    </lineage>
</organism>
<protein>
    <recommendedName>
        <fullName>Signal peptidase I</fullName>
        <shortName>SPase I</shortName>
        <ecNumber>3.4.21.89</ecNumber>
    </recommendedName>
    <alternativeName>
        <fullName>Leader peptidase I</fullName>
    </alternativeName>
</protein>
<comment type="catalytic activity">
    <reaction>
        <text>Cleavage of hydrophobic, N-terminal signal or leader sequences from secreted and periplasmic proteins.</text>
        <dbReference type="EC" id="3.4.21.89"/>
    </reaction>
</comment>
<comment type="subcellular location">
    <subcellularLocation>
        <location evidence="3">Cell inner membrane</location>
        <topology evidence="3">Single-pass type II membrane protein</topology>
    </subcellularLocation>
</comment>
<comment type="similarity">
    <text evidence="3">Belongs to the peptidase S26 family.</text>
</comment>
<proteinExistence type="inferred from homology"/>
<evidence type="ECO:0000250" key="1"/>
<evidence type="ECO:0000255" key="2"/>
<evidence type="ECO:0000305" key="3"/>
<name>LEP_RICB8</name>
<gene>
    <name type="primary">lepB</name>
    <name type="ordered locus">A1I_01370</name>
</gene>
<sequence length="289" mass="33889">MKKLTSTTTTLWDNKLFINNLKNFMQTNTESNNNKTTAQEWKSFILVVVIALMIRILIIESFVVPTGSMKATILENDRIFGTKYSYGYSNYSLSFFDFIHLFKGRIFARTPERGDIIIFRPPHEMNTRYIKRLIGLPGDKVQLIDDVIYINDEKIERVESGIYVSEEGRKYLKFKETLPNGKTYFSYKLAPVLGIMFNDKYGNTDAFYVPEGEYFFLGDNRDQSNDSRIDLGFVPFENFIAKAQFIWFSTKITWWDSDIGVINLILKLKPWAESIRFNRIFRNLYSIED</sequence>
<keyword id="KW-0997">Cell inner membrane</keyword>
<keyword id="KW-1003">Cell membrane</keyword>
<keyword id="KW-0378">Hydrolase</keyword>
<keyword id="KW-0472">Membrane</keyword>
<keyword id="KW-0812">Transmembrane</keyword>
<keyword id="KW-1133">Transmembrane helix</keyword>
<feature type="chain" id="PRO_0000316272" description="Signal peptidase I">
    <location>
        <begin position="1"/>
        <end position="289"/>
    </location>
</feature>
<feature type="topological domain" description="Cytoplasmic" evidence="2">
    <location>
        <begin position="1"/>
        <end position="43"/>
    </location>
</feature>
<feature type="transmembrane region" description="Helical" evidence="2">
    <location>
        <begin position="44"/>
        <end position="64"/>
    </location>
</feature>
<feature type="topological domain" description="Periplasmic" evidence="2">
    <location>
        <begin position="65"/>
        <end position="289"/>
    </location>
</feature>
<feature type="active site" evidence="1">
    <location>
        <position position="68"/>
    </location>
</feature>
<feature type="active site" evidence="1">
    <location>
        <position position="131"/>
    </location>
</feature>
<reference key="1">
    <citation type="submission" date="2007-09" db="EMBL/GenBank/DDBJ databases">
        <title>Complete genome sequencing of Rickettsia bellii.</title>
        <authorList>
            <person name="Madan A."/>
            <person name="Lee H."/>
            <person name="Madan A."/>
            <person name="Yoon J.-G."/>
            <person name="Ryu G.-Y."/>
            <person name="Dasch G."/>
            <person name="Ereemeva M."/>
        </authorList>
    </citation>
    <scope>NUCLEOTIDE SEQUENCE [LARGE SCALE GENOMIC DNA]</scope>
    <source>
        <strain>OSU 85-389</strain>
    </source>
</reference>